<protein>
    <recommendedName>
        <fullName evidence="1">Large ribosomal subunit protein bL17</fullName>
    </recommendedName>
    <alternativeName>
        <fullName evidence="2">50S ribosomal protein L17</fullName>
    </alternativeName>
</protein>
<reference key="1">
    <citation type="submission" date="2007-06" db="EMBL/GenBank/DDBJ databases">
        <title>Complete sequence of Sinorhizobium medicae WSM419 chromosome.</title>
        <authorList>
            <consortium name="US DOE Joint Genome Institute"/>
            <person name="Copeland A."/>
            <person name="Lucas S."/>
            <person name="Lapidus A."/>
            <person name="Barry K."/>
            <person name="Glavina del Rio T."/>
            <person name="Dalin E."/>
            <person name="Tice H."/>
            <person name="Pitluck S."/>
            <person name="Chain P."/>
            <person name="Malfatti S."/>
            <person name="Shin M."/>
            <person name="Vergez L."/>
            <person name="Schmutz J."/>
            <person name="Larimer F."/>
            <person name="Land M."/>
            <person name="Hauser L."/>
            <person name="Kyrpides N."/>
            <person name="Mikhailova N."/>
            <person name="Reeve W.G."/>
            <person name="Richardson P."/>
        </authorList>
    </citation>
    <scope>NUCLEOTIDE SEQUENCE [LARGE SCALE GENOMIC DNA]</scope>
    <source>
        <strain>WSM419</strain>
    </source>
</reference>
<comment type="subunit">
    <text evidence="1">Part of the 50S ribosomal subunit. Contacts protein L32.</text>
</comment>
<comment type="similarity">
    <text evidence="1">Belongs to the bacterial ribosomal protein bL17 family.</text>
</comment>
<proteinExistence type="inferred from homology"/>
<accession>A6U884</accession>
<sequence length="141" mass="15418">MRHGKAGRKLNRTASHRKAMFANMAASLIEHEQIVTTLPKAKEIRPIVEKLVTLGKRGDLHARRQAVSQIRDVAVVAKLFDAIASRYATRNGGYLRIMKAGFRQGDNAPLAVIEFVDRDADAKGSKDRARVAAEAEAAEAA</sequence>
<evidence type="ECO:0000255" key="1">
    <source>
        <dbReference type="HAMAP-Rule" id="MF_01368"/>
    </source>
</evidence>
<evidence type="ECO:0000305" key="2"/>
<feature type="chain" id="PRO_1000055946" description="Large ribosomal subunit protein bL17">
    <location>
        <begin position="1"/>
        <end position="141"/>
    </location>
</feature>
<dbReference type="EMBL" id="CP000738">
    <property type="protein sequence ID" value="ABR59864.1"/>
    <property type="molecule type" value="Genomic_DNA"/>
</dbReference>
<dbReference type="RefSeq" id="WP_011975188.1">
    <property type="nucleotide sequence ID" value="NC_009636.1"/>
</dbReference>
<dbReference type="RefSeq" id="YP_001326699.1">
    <property type="nucleotide sequence ID" value="NC_009636.1"/>
</dbReference>
<dbReference type="SMR" id="A6U884"/>
<dbReference type="STRING" id="366394.Smed_1011"/>
<dbReference type="GeneID" id="61614905"/>
<dbReference type="KEGG" id="smd:Smed_1011"/>
<dbReference type="PATRIC" id="fig|366394.8.peg.4132"/>
<dbReference type="eggNOG" id="COG0203">
    <property type="taxonomic scope" value="Bacteria"/>
</dbReference>
<dbReference type="HOGENOM" id="CLU_074407_2_0_5"/>
<dbReference type="OrthoDB" id="9809073at2"/>
<dbReference type="Proteomes" id="UP000001108">
    <property type="component" value="Chromosome"/>
</dbReference>
<dbReference type="GO" id="GO:0022625">
    <property type="term" value="C:cytosolic large ribosomal subunit"/>
    <property type="evidence" value="ECO:0007669"/>
    <property type="project" value="TreeGrafter"/>
</dbReference>
<dbReference type="GO" id="GO:0003735">
    <property type="term" value="F:structural constituent of ribosome"/>
    <property type="evidence" value="ECO:0007669"/>
    <property type="project" value="InterPro"/>
</dbReference>
<dbReference type="GO" id="GO:0006412">
    <property type="term" value="P:translation"/>
    <property type="evidence" value="ECO:0007669"/>
    <property type="project" value="UniProtKB-UniRule"/>
</dbReference>
<dbReference type="FunFam" id="3.90.1030.10:FF:000001">
    <property type="entry name" value="50S ribosomal protein L17"/>
    <property type="match status" value="1"/>
</dbReference>
<dbReference type="Gene3D" id="3.90.1030.10">
    <property type="entry name" value="Ribosomal protein L17"/>
    <property type="match status" value="1"/>
</dbReference>
<dbReference type="HAMAP" id="MF_01368">
    <property type="entry name" value="Ribosomal_bL17"/>
    <property type="match status" value="1"/>
</dbReference>
<dbReference type="InterPro" id="IPR000456">
    <property type="entry name" value="Ribosomal_bL17"/>
</dbReference>
<dbReference type="InterPro" id="IPR047859">
    <property type="entry name" value="Ribosomal_bL17_CS"/>
</dbReference>
<dbReference type="InterPro" id="IPR036373">
    <property type="entry name" value="Ribosomal_bL17_sf"/>
</dbReference>
<dbReference type="NCBIfam" id="TIGR00059">
    <property type="entry name" value="L17"/>
    <property type="match status" value="1"/>
</dbReference>
<dbReference type="PANTHER" id="PTHR14413:SF16">
    <property type="entry name" value="LARGE RIBOSOMAL SUBUNIT PROTEIN BL17M"/>
    <property type="match status" value="1"/>
</dbReference>
<dbReference type="PANTHER" id="PTHR14413">
    <property type="entry name" value="RIBOSOMAL PROTEIN L17"/>
    <property type="match status" value="1"/>
</dbReference>
<dbReference type="Pfam" id="PF01196">
    <property type="entry name" value="Ribosomal_L17"/>
    <property type="match status" value="1"/>
</dbReference>
<dbReference type="SUPFAM" id="SSF64263">
    <property type="entry name" value="Prokaryotic ribosomal protein L17"/>
    <property type="match status" value="1"/>
</dbReference>
<dbReference type="PROSITE" id="PS01167">
    <property type="entry name" value="RIBOSOMAL_L17"/>
    <property type="match status" value="1"/>
</dbReference>
<name>RL17_SINMW</name>
<keyword id="KW-0687">Ribonucleoprotein</keyword>
<keyword id="KW-0689">Ribosomal protein</keyword>
<gene>
    <name evidence="1" type="primary">rplQ</name>
    <name type="ordered locus">Smed_1011</name>
</gene>
<organism>
    <name type="scientific">Sinorhizobium medicae (strain WSM419)</name>
    <name type="common">Ensifer medicae</name>
    <dbReference type="NCBI Taxonomy" id="366394"/>
    <lineage>
        <taxon>Bacteria</taxon>
        <taxon>Pseudomonadati</taxon>
        <taxon>Pseudomonadota</taxon>
        <taxon>Alphaproteobacteria</taxon>
        <taxon>Hyphomicrobiales</taxon>
        <taxon>Rhizobiaceae</taxon>
        <taxon>Sinorhizobium/Ensifer group</taxon>
        <taxon>Sinorhizobium</taxon>
    </lineage>
</organism>